<keyword id="KW-0067">ATP-binding</keyword>
<keyword id="KW-0436">Ligase</keyword>
<keyword id="KW-0547">Nucleotide-binding</keyword>
<keyword id="KW-0648">Protein biosynthesis</keyword>
<keyword id="KW-1185">Reference proteome</keyword>
<evidence type="ECO:0000255" key="1">
    <source>
        <dbReference type="HAMAP-Rule" id="MF_00120"/>
    </source>
</evidence>
<evidence type="ECO:0000305" key="2"/>
<reference key="1">
    <citation type="journal article" date="2005" name="PLoS Biol.">
        <title>The Wolbachia genome of Brugia malayi: endosymbiont evolution within a human pathogenic nematode.</title>
        <authorList>
            <person name="Foster J."/>
            <person name="Ganatra M."/>
            <person name="Kamal I."/>
            <person name="Ware J."/>
            <person name="Makarova K."/>
            <person name="Ivanova N."/>
            <person name="Bhattacharyya A."/>
            <person name="Kapatral V."/>
            <person name="Kumar S."/>
            <person name="Posfai J."/>
            <person name="Vincze T."/>
            <person name="Ingram J."/>
            <person name="Moran L."/>
            <person name="Lapidus A."/>
            <person name="Omelchenko M."/>
            <person name="Kyrpides N."/>
            <person name="Ghedin E."/>
            <person name="Wang S."/>
            <person name="Goltsman E."/>
            <person name="Joukov V."/>
            <person name="Ostrovskaya O."/>
            <person name="Tsukerman K."/>
            <person name="Mazur M."/>
            <person name="Comb D."/>
            <person name="Koonin E."/>
            <person name="Slatko B."/>
        </authorList>
    </citation>
    <scope>NUCLEOTIDE SEQUENCE [LARGE SCALE GENOMIC DNA]</scope>
    <source>
        <strain>TRS</strain>
    </source>
</reference>
<proteinExistence type="inferred from homology"/>
<gene>
    <name evidence="1" type="primary">gatA</name>
    <name type="ordered locus">Wbm0763</name>
</gene>
<sequence>MNELRKLSIAQMHNGLKQRSFSAVELIEVHINAVENEKLNAFITKTPEIAIKAAKTADERFSQQKDSTISPLMGIPVGVKDLFCTKGVKTTACSKMLENFIPTYESTVSDLLLKSGAAMLGKLNMDEFAMGSANINSYFGPVENVWVRKSDGEKVVPGGSSGGSAASVAGFLCAGALGSDTGGSVRQPAAYCGVVGAKPTYGRCSRFGMIAFASSLDQAGVITRSVSDSALMLETICGYDNKDSTSSERPVPRFSNFINGDIKGRRIGIPKEYRMDGISEEIIYHWEKVSSDLKENGAEVVDITLPHTKYAIPVYYLICSAEASSNLARYDGVRYGLRVNADILEEMYSLTRAEGFGKEVKRRILIGAYALSSGHYNEYYEKAQCIRALIRNDFIKAFEKIDYILVPSAPTEAFGLNEKPDPLIMCINDVFTVPASLAGLPAISVPVGLSNEGLPLALQVIGNYYDEAGMLNVASVIEQNCSRIIKLNS</sequence>
<accession>Q5GRM3</accession>
<organism>
    <name type="scientific">Wolbachia sp. subsp. Brugia malayi (strain TRS)</name>
    <dbReference type="NCBI Taxonomy" id="292805"/>
    <lineage>
        <taxon>Bacteria</taxon>
        <taxon>Pseudomonadati</taxon>
        <taxon>Pseudomonadota</taxon>
        <taxon>Alphaproteobacteria</taxon>
        <taxon>Rickettsiales</taxon>
        <taxon>Anaplasmataceae</taxon>
        <taxon>Wolbachieae</taxon>
        <taxon>Wolbachia</taxon>
    </lineage>
</organism>
<feature type="chain" id="PRO_0000241177" description="Glutamyl-tRNA(Gln) amidotransferase subunit A">
    <location>
        <begin position="1"/>
        <end position="489"/>
    </location>
</feature>
<feature type="active site" description="Charge relay system" evidence="1">
    <location>
        <position position="80"/>
    </location>
</feature>
<feature type="active site" description="Charge relay system" evidence="1">
    <location>
        <position position="160"/>
    </location>
</feature>
<feature type="active site" description="Acyl-ester intermediate" evidence="1">
    <location>
        <position position="184"/>
    </location>
</feature>
<dbReference type="EC" id="6.3.5.7" evidence="1"/>
<dbReference type="EMBL" id="AE017321">
    <property type="protein sequence ID" value="AAW71351.1"/>
    <property type="status" value="ALT_INIT"/>
    <property type="molecule type" value="Genomic_DNA"/>
</dbReference>
<dbReference type="RefSeq" id="WP_041571512.1">
    <property type="nucleotide sequence ID" value="NC_006833.1"/>
</dbReference>
<dbReference type="SMR" id="Q5GRM3"/>
<dbReference type="STRING" id="292805.Wbm0763"/>
<dbReference type="KEGG" id="wbm:Wbm0763"/>
<dbReference type="eggNOG" id="COG0154">
    <property type="taxonomic scope" value="Bacteria"/>
</dbReference>
<dbReference type="HOGENOM" id="CLU_009600_0_3_5"/>
<dbReference type="Proteomes" id="UP000000534">
    <property type="component" value="Chromosome"/>
</dbReference>
<dbReference type="GO" id="GO:0030956">
    <property type="term" value="C:glutamyl-tRNA(Gln) amidotransferase complex"/>
    <property type="evidence" value="ECO:0007669"/>
    <property type="project" value="InterPro"/>
</dbReference>
<dbReference type="GO" id="GO:0005524">
    <property type="term" value="F:ATP binding"/>
    <property type="evidence" value="ECO:0007669"/>
    <property type="project" value="UniProtKB-KW"/>
</dbReference>
<dbReference type="GO" id="GO:0050567">
    <property type="term" value="F:glutaminyl-tRNA synthase (glutamine-hydrolyzing) activity"/>
    <property type="evidence" value="ECO:0007669"/>
    <property type="project" value="UniProtKB-UniRule"/>
</dbReference>
<dbReference type="GO" id="GO:0006412">
    <property type="term" value="P:translation"/>
    <property type="evidence" value="ECO:0007669"/>
    <property type="project" value="UniProtKB-UniRule"/>
</dbReference>
<dbReference type="Gene3D" id="3.90.1300.10">
    <property type="entry name" value="Amidase signature (AS) domain"/>
    <property type="match status" value="1"/>
</dbReference>
<dbReference type="HAMAP" id="MF_00120">
    <property type="entry name" value="GatA"/>
    <property type="match status" value="1"/>
</dbReference>
<dbReference type="InterPro" id="IPR000120">
    <property type="entry name" value="Amidase"/>
</dbReference>
<dbReference type="InterPro" id="IPR020556">
    <property type="entry name" value="Amidase_CS"/>
</dbReference>
<dbReference type="InterPro" id="IPR023631">
    <property type="entry name" value="Amidase_dom"/>
</dbReference>
<dbReference type="InterPro" id="IPR036928">
    <property type="entry name" value="AS_sf"/>
</dbReference>
<dbReference type="InterPro" id="IPR004412">
    <property type="entry name" value="GatA"/>
</dbReference>
<dbReference type="NCBIfam" id="TIGR00132">
    <property type="entry name" value="gatA"/>
    <property type="match status" value="1"/>
</dbReference>
<dbReference type="PANTHER" id="PTHR11895:SF151">
    <property type="entry name" value="GLUTAMYL-TRNA(GLN) AMIDOTRANSFERASE SUBUNIT A"/>
    <property type="match status" value="1"/>
</dbReference>
<dbReference type="PANTHER" id="PTHR11895">
    <property type="entry name" value="TRANSAMIDASE"/>
    <property type="match status" value="1"/>
</dbReference>
<dbReference type="Pfam" id="PF01425">
    <property type="entry name" value="Amidase"/>
    <property type="match status" value="1"/>
</dbReference>
<dbReference type="SUPFAM" id="SSF75304">
    <property type="entry name" value="Amidase signature (AS) enzymes"/>
    <property type="match status" value="1"/>
</dbReference>
<dbReference type="PROSITE" id="PS00571">
    <property type="entry name" value="AMIDASES"/>
    <property type="match status" value="1"/>
</dbReference>
<comment type="function">
    <text evidence="1">Allows the formation of correctly charged Gln-tRNA(Gln) through the transamidation of misacylated Glu-tRNA(Gln) in organisms which lack glutaminyl-tRNA synthetase. The reaction takes place in the presence of glutamine and ATP through an activated gamma-phospho-Glu-tRNA(Gln).</text>
</comment>
<comment type="catalytic activity">
    <reaction evidence="1">
        <text>L-glutamyl-tRNA(Gln) + L-glutamine + ATP + H2O = L-glutaminyl-tRNA(Gln) + L-glutamate + ADP + phosphate + H(+)</text>
        <dbReference type="Rhea" id="RHEA:17521"/>
        <dbReference type="Rhea" id="RHEA-COMP:9681"/>
        <dbReference type="Rhea" id="RHEA-COMP:9684"/>
        <dbReference type="ChEBI" id="CHEBI:15377"/>
        <dbReference type="ChEBI" id="CHEBI:15378"/>
        <dbReference type="ChEBI" id="CHEBI:29985"/>
        <dbReference type="ChEBI" id="CHEBI:30616"/>
        <dbReference type="ChEBI" id="CHEBI:43474"/>
        <dbReference type="ChEBI" id="CHEBI:58359"/>
        <dbReference type="ChEBI" id="CHEBI:78520"/>
        <dbReference type="ChEBI" id="CHEBI:78521"/>
        <dbReference type="ChEBI" id="CHEBI:456216"/>
        <dbReference type="EC" id="6.3.5.7"/>
    </reaction>
</comment>
<comment type="subunit">
    <text evidence="1">Heterotrimer of A, B and C subunits.</text>
</comment>
<comment type="similarity">
    <text evidence="1">Belongs to the amidase family. GatA subfamily.</text>
</comment>
<comment type="sequence caution" evidence="2">
    <conflict type="erroneous initiation">
        <sequence resource="EMBL-CDS" id="AAW71351"/>
    </conflict>
</comment>
<name>GATA_WOLTR</name>
<protein>
    <recommendedName>
        <fullName evidence="1">Glutamyl-tRNA(Gln) amidotransferase subunit A</fullName>
        <shortName evidence="1">Glu-ADT subunit A</shortName>
        <ecNumber evidence="1">6.3.5.7</ecNumber>
    </recommendedName>
</protein>